<accession>P67133</accession>
<accession>G0K9I2</accession>
<accession>Q8FXU1</accession>
<accession>Q8YEA4</accession>
<dbReference type="EC" id="3.1.-.-" evidence="1"/>
<dbReference type="EMBL" id="AE014291">
    <property type="protein sequence ID" value="AAN31046.1"/>
    <property type="status" value="ALT_INIT"/>
    <property type="molecule type" value="Genomic_DNA"/>
</dbReference>
<dbReference type="EMBL" id="CP002997">
    <property type="protein sequence ID" value="AEM19463.1"/>
    <property type="status" value="ALT_INIT"/>
    <property type="molecule type" value="Genomic_DNA"/>
</dbReference>
<dbReference type="SMR" id="P67133"/>
<dbReference type="KEGG" id="bms:BR2156"/>
<dbReference type="KEGG" id="bsi:BS1330_I2150"/>
<dbReference type="HOGENOM" id="CLU_106710_0_0_5"/>
<dbReference type="PhylomeDB" id="P67133"/>
<dbReference type="Proteomes" id="UP000007104">
    <property type="component" value="Chromosome I"/>
</dbReference>
<dbReference type="GO" id="GO:0005737">
    <property type="term" value="C:cytoplasm"/>
    <property type="evidence" value="ECO:0007669"/>
    <property type="project" value="UniProtKB-SubCell"/>
</dbReference>
<dbReference type="GO" id="GO:0004222">
    <property type="term" value="F:metalloendopeptidase activity"/>
    <property type="evidence" value="ECO:0007669"/>
    <property type="project" value="InterPro"/>
</dbReference>
<dbReference type="GO" id="GO:0004521">
    <property type="term" value="F:RNA endonuclease activity"/>
    <property type="evidence" value="ECO:0007669"/>
    <property type="project" value="UniProtKB-UniRule"/>
</dbReference>
<dbReference type="GO" id="GO:0008270">
    <property type="term" value="F:zinc ion binding"/>
    <property type="evidence" value="ECO:0007669"/>
    <property type="project" value="UniProtKB-UniRule"/>
</dbReference>
<dbReference type="GO" id="GO:0006364">
    <property type="term" value="P:rRNA processing"/>
    <property type="evidence" value="ECO:0007669"/>
    <property type="project" value="UniProtKB-UniRule"/>
</dbReference>
<dbReference type="Gene3D" id="3.40.390.30">
    <property type="entry name" value="Metalloproteases ('zincins'), catalytic domain"/>
    <property type="match status" value="1"/>
</dbReference>
<dbReference type="HAMAP" id="MF_00009">
    <property type="entry name" value="Endoribonucl_YbeY"/>
    <property type="match status" value="1"/>
</dbReference>
<dbReference type="InterPro" id="IPR023091">
    <property type="entry name" value="MetalPrtase_cat_dom_sf_prd"/>
</dbReference>
<dbReference type="InterPro" id="IPR002036">
    <property type="entry name" value="YbeY"/>
</dbReference>
<dbReference type="InterPro" id="IPR020549">
    <property type="entry name" value="YbeY_CS"/>
</dbReference>
<dbReference type="NCBIfam" id="TIGR00043">
    <property type="entry name" value="rRNA maturation RNase YbeY"/>
    <property type="match status" value="1"/>
</dbReference>
<dbReference type="PANTHER" id="PTHR46986">
    <property type="entry name" value="ENDORIBONUCLEASE YBEY, CHLOROPLASTIC"/>
    <property type="match status" value="1"/>
</dbReference>
<dbReference type="PANTHER" id="PTHR46986:SF1">
    <property type="entry name" value="ENDORIBONUCLEASE YBEY, CHLOROPLASTIC"/>
    <property type="match status" value="1"/>
</dbReference>
<dbReference type="Pfam" id="PF02130">
    <property type="entry name" value="YbeY"/>
    <property type="match status" value="1"/>
</dbReference>
<dbReference type="SUPFAM" id="SSF55486">
    <property type="entry name" value="Metalloproteases ('zincins'), catalytic domain"/>
    <property type="match status" value="1"/>
</dbReference>
<dbReference type="PROSITE" id="PS01306">
    <property type="entry name" value="UPF0054"/>
    <property type="match status" value="1"/>
</dbReference>
<name>YBEY_BRUSU</name>
<sequence length="168" mass="18423">MSDNAIHIDIMIEAGNWPDEASLESLVSKSVAAAWNNLGLKSATSELSVVFTDDASIQLLNGEWRGKDKPTNVLSFPAFPVKAGSQPGPMLGDIVIARETVEREAKEEGKPIENHLSHLVVHGFLHLLGYDHETDEEAEVMEAREREILHALAIPDPYAVSDEDINND</sequence>
<reference key="1">
    <citation type="journal article" date="2002" name="Proc. Natl. Acad. Sci. U.S.A.">
        <title>The Brucella suis genome reveals fundamental similarities between animal and plant pathogens and symbionts.</title>
        <authorList>
            <person name="Paulsen I.T."/>
            <person name="Seshadri R."/>
            <person name="Nelson K.E."/>
            <person name="Eisen J.A."/>
            <person name="Heidelberg J.F."/>
            <person name="Read T.D."/>
            <person name="Dodson R.J."/>
            <person name="Umayam L.A."/>
            <person name="Brinkac L.M."/>
            <person name="Beanan M.J."/>
            <person name="Daugherty S.C."/>
            <person name="DeBoy R.T."/>
            <person name="Durkin A.S."/>
            <person name="Kolonay J.F."/>
            <person name="Madupu R."/>
            <person name="Nelson W.C."/>
            <person name="Ayodeji B."/>
            <person name="Kraul M."/>
            <person name="Shetty J."/>
            <person name="Malek J.A."/>
            <person name="Van Aken S.E."/>
            <person name="Riedmuller S."/>
            <person name="Tettelin H."/>
            <person name="Gill S.R."/>
            <person name="White O."/>
            <person name="Salzberg S.L."/>
            <person name="Hoover D.L."/>
            <person name="Lindler L.E."/>
            <person name="Halling S.M."/>
            <person name="Boyle S.M."/>
            <person name="Fraser C.M."/>
        </authorList>
    </citation>
    <scope>NUCLEOTIDE SEQUENCE [LARGE SCALE GENOMIC DNA]</scope>
    <source>
        <strain>1330</strain>
    </source>
</reference>
<reference key="2">
    <citation type="journal article" date="2011" name="J. Bacteriol.">
        <title>Revised genome sequence of Brucella suis 1330.</title>
        <authorList>
            <person name="Tae H."/>
            <person name="Shallom S."/>
            <person name="Settlage R."/>
            <person name="Preston D."/>
            <person name="Adams L.G."/>
            <person name="Garner H.R."/>
        </authorList>
    </citation>
    <scope>NUCLEOTIDE SEQUENCE [LARGE SCALE GENOMIC DNA]</scope>
    <source>
        <strain>1330</strain>
    </source>
</reference>
<feature type="chain" id="PRO_0000102424" description="Endoribonuclease YbeY">
    <location>
        <begin position="1"/>
        <end position="168"/>
    </location>
</feature>
<feature type="binding site" evidence="1">
    <location>
        <position position="122"/>
    </location>
    <ligand>
        <name>Zn(2+)</name>
        <dbReference type="ChEBI" id="CHEBI:29105"/>
        <note>catalytic</note>
    </ligand>
</feature>
<feature type="binding site" evidence="1">
    <location>
        <position position="126"/>
    </location>
    <ligand>
        <name>Zn(2+)</name>
        <dbReference type="ChEBI" id="CHEBI:29105"/>
        <note>catalytic</note>
    </ligand>
</feature>
<feature type="binding site" evidence="1">
    <location>
        <position position="132"/>
    </location>
    <ligand>
        <name>Zn(2+)</name>
        <dbReference type="ChEBI" id="CHEBI:29105"/>
        <note>catalytic</note>
    </ligand>
</feature>
<keyword id="KW-0963">Cytoplasm</keyword>
<keyword id="KW-0255">Endonuclease</keyword>
<keyword id="KW-0378">Hydrolase</keyword>
<keyword id="KW-0479">Metal-binding</keyword>
<keyword id="KW-0540">Nuclease</keyword>
<keyword id="KW-0690">Ribosome biogenesis</keyword>
<keyword id="KW-0698">rRNA processing</keyword>
<keyword id="KW-0862">Zinc</keyword>
<comment type="function">
    <text evidence="1">Single strand-specific metallo-endoribonuclease involved in late-stage 70S ribosome quality control and in maturation of the 3' terminus of the 16S rRNA.</text>
</comment>
<comment type="cofactor">
    <cofactor evidence="1">
        <name>Zn(2+)</name>
        <dbReference type="ChEBI" id="CHEBI:29105"/>
    </cofactor>
    <text evidence="1">Binds 1 zinc ion.</text>
</comment>
<comment type="subcellular location">
    <subcellularLocation>
        <location evidence="1">Cytoplasm</location>
    </subcellularLocation>
</comment>
<comment type="similarity">
    <text evidence="1">Belongs to the endoribonuclease YbeY family.</text>
</comment>
<comment type="sequence caution" evidence="2">
    <conflict type="erroneous initiation">
        <sequence resource="EMBL-CDS" id="AAN31046"/>
    </conflict>
</comment>
<comment type="sequence caution" evidence="2">
    <conflict type="erroneous initiation">
        <sequence resource="EMBL-CDS" id="AEM19463"/>
    </conflict>
    <text>Truncated N-terminus.</text>
</comment>
<evidence type="ECO:0000255" key="1">
    <source>
        <dbReference type="HAMAP-Rule" id="MF_00009"/>
    </source>
</evidence>
<evidence type="ECO:0000305" key="2"/>
<protein>
    <recommendedName>
        <fullName evidence="1">Endoribonuclease YbeY</fullName>
        <ecNumber evidence="1">3.1.-.-</ecNumber>
    </recommendedName>
</protein>
<organism>
    <name type="scientific">Brucella suis biovar 1 (strain 1330)</name>
    <dbReference type="NCBI Taxonomy" id="204722"/>
    <lineage>
        <taxon>Bacteria</taxon>
        <taxon>Pseudomonadati</taxon>
        <taxon>Pseudomonadota</taxon>
        <taxon>Alphaproteobacteria</taxon>
        <taxon>Hyphomicrobiales</taxon>
        <taxon>Brucellaceae</taxon>
        <taxon>Brucella/Ochrobactrum group</taxon>
        <taxon>Brucella</taxon>
    </lineage>
</organism>
<gene>
    <name evidence="1" type="primary">ybeY</name>
    <name type="ordered locus">BR2156</name>
    <name type="ordered locus">BS1330_I2150</name>
</gene>
<proteinExistence type="inferred from homology"/>